<accession>Q9V107</accession>
<accession>G8ZJ87</accession>
<gene>
    <name evidence="1" type="primary">truD</name>
    <name type="ordered locus">PYRAB06220</name>
    <name type="ORF">PAB0430</name>
</gene>
<name>TRUD_PYRAB</name>
<evidence type="ECO:0000255" key="1">
    <source>
        <dbReference type="HAMAP-Rule" id="MF_01082"/>
    </source>
</evidence>
<keyword id="KW-0413">Isomerase</keyword>
<keyword id="KW-0819">tRNA processing</keyword>
<protein>
    <recommendedName>
        <fullName evidence="1">Probable tRNA pseudouridine synthase D</fullName>
        <ecNumber evidence="1">5.4.99.27</ecNumber>
    </recommendedName>
    <alternativeName>
        <fullName evidence="1">tRNA pseudouridine(13) synthase</fullName>
    </alternativeName>
    <alternativeName>
        <fullName evidence="1">tRNA pseudouridylate synthase D</fullName>
    </alternativeName>
    <alternativeName>
        <fullName evidence="1">tRNA-uridine isomerase D</fullName>
    </alternativeName>
</protein>
<organism>
    <name type="scientific">Pyrococcus abyssi (strain GE5 / Orsay)</name>
    <dbReference type="NCBI Taxonomy" id="272844"/>
    <lineage>
        <taxon>Archaea</taxon>
        <taxon>Methanobacteriati</taxon>
        <taxon>Methanobacteriota</taxon>
        <taxon>Thermococci</taxon>
        <taxon>Thermococcales</taxon>
        <taxon>Thermococcaceae</taxon>
        <taxon>Pyrococcus</taxon>
    </lineage>
</organism>
<reference key="1">
    <citation type="journal article" date="2003" name="Mol. Microbiol.">
        <title>An integrated analysis of the genome of the hyperthermophilic archaeon Pyrococcus abyssi.</title>
        <authorList>
            <person name="Cohen G.N."/>
            <person name="Barbe V."/>
            <person name="Flament D."/>
            <person name="Galperin M."/>
            <person name="Heilig R."/>
            <person name="Lecompte O."/>
            <person name="Poch O."/>
            <person name="Prieur D."/>
            <person name="Querellou J."/>
            <person name="Ripp R."/>
            <person name="Thierry J.-C."/>
            <person name="Van der Oost J."/>
            <person name="Weissenbach J."/>
            <person name="Zivanovic Y."/>
            <person name="Forterre P."/>
        </authorList>
    </citation>
    <scope>NUCLEOTIDE SEQUENCE [LARGE SCALE GENOMIC DNA]</scope>
    <source>
        <strain>GE5 / Orsay</strain>
    </source>
</reference>
<reference key="2">
    <citation type="journal article" date="2012" name="Curr. Microbiol.">
        <title>Re-annotation of two hyperthermophilic archaea Pyrococcus abyssi GE5 and Pyrococcus furiosus DSM 3638.</title>
        <authorList>
            <person name="Gao J."/>
            <person name="Wang J."/>
        </authorList>
    </citation>
    <scope>GENOME REANNOTATION</scope>
    <source>
        <strain>GE5 / Orsay</strain>
    </source>
</reference>
<comment type="function">
    <text evidence="1">Could be responsible for synthesis of pseudouridine from uracil-13 in transfer RNAs.</text>
</comment>
<comment type="catalytic activity">
    <reaction evidence="1">
        <text>uridine(13) in tRNA = pseudouridine(13) in tRNA</text>
        <dbReference type="Rhea" id="RHEA:42540"/>
        <dbReference type="Rhea" id="RHEA-COMP:10105"/>
        <dbReference type="Rhea" id="RHEA-COMP:10106"/>
        <dbReference type="ChEBI" id="CHEBI:65314"/>
        <dbReference type="ChEBI" id="CHEBI:65315"/>
        <dbReference type="EC" id="5.4.99.27"/>
    </reaction>
</comment>
<comment type="similarity">
    <text evidence="1">Belongs to the pseudouridine synthase TruD family.</text>
</comment>
<proteinExistence type="inferred from homology"/>
<sequence>MLEELKYLSETPGIGGRIKVKPEDFIVREIIPKSIFKGNCQIYLMKKRNWETIAAIKEIAKRIGIHYSEIGFAGTKDRHAVTYQYISVCRDVRKEVEKLKIRDVELKFVGYGRPLKLGFLLGNFFLIRVRDVKRPELIPKIIEELKIKGGFPNYFGIQRFGEKRSVNHIVGKLLLEGKYEEAAEVFLGYPGNGMEGDEARKRFLETKDVDLALEEFPKFLRYERAMLYRYRETRSWKKAFLVLPRPILRIFIHAFQAYLFNLYLSRRIEEGLPLNEAIPGDIVVQVKRGIPLRTRTYRVTETNVDFVNEKIKRGEAMVSGPIFGYSYRKAHGIPGRLEEEILDENEVNVEMFKKLPKPMREPGGRRELLIKPRKFAYKRKEEEVLFKFFLPKGVYATSVLREITKH</sequence>
<feature type="chain" id="PRO_0000152549" description="Probable tRNA pseudouridine synthase D">
    <location>
        <begin position="1"/>
        <end position="406"/>
    </location>
</feature>
<feature type="domain" description="TRUD" evidence="1">
    <location>
        <begin position="150"/>
        <end position="371"/>
    </location>
</feature>
<feature type="active site" description="Nucleophile" evidence="1">
    <location>
        <position position="77"/>
    </location>
</feature>
<dbReference type="EC" id="5.4.99.27" evidence="1"/>
<dbReference type="EMBL" id="AJ248284">
    <property type="protein sequence ID" value="CAB49544.1"/>
    <property type="molecule type" value="Genomic_DNA"/>
</dbReference>
<dbReference type="EMBL" id="HE613800">
    <property type="protein sequence ID" value="CCE70014.1"/>
    <property type="molecule type" value="Genomic_DNA"/>
</dbReference>
<dbReference type="PIR" id="A75183">
    <property type="entry name" value="A75183"/>
</dbReference>
<dbReference type="RefSeq" id="WP_010867746.1">
    <property type="nucleotide sequence ID" value="NC_000868.1"/>
</dbReference>
<dbReference type="SMR" id="Q9V107"/>
<dbReference type="STRING" id="272844.PAB0430"/>
<dbReference type="KEGG" id="pab:PAB0430"/>
<dbReference type="PATRIC" id="fig|272844.11.peg.660"/>
<dbReference type="eggNOG" id="arCOG04252">
    <property type="taxonomic scope" value="Archaea"/>
</dbReference>
<dbReference type="HOGENOM" id="CLU_005281_4_1_2"/>
<dbReference type="OrthoDB" id="1798at2157"/>
<dbReference type="PhylomeDB" id="Q9V107"/>
<dbReference type="Proteomes" id="UP000000810">
    <property type="component" value="Chromosome"/>
</dbReference>
<dbReference type="Proteomes" id="UP000009139">
    <property type="component" value="Chromosome"/>
</dbReference>
<dbReference type="GO" id="GO:0003723">
    <property type="term" value="F:RNA binding"/>
    <property type="evidence" value="ECO:0007669"/>
    <property type="project" value="InterPro"/>
</dbReference>
<dbReference type="GO" id="GO:0160150">
    <property type="term" value="F:tRNA pseudouridine(13) synthase activity"/>
    <property type="evidence" value="ECO:0007669"/>
    <property type="project" value="UniProtKB-EC"/>
</dbReference>
<dbReference type="GO" id="GO:0031119">
    <property type="term" value="P:tRNA pseudouridine synthesis"/>
    <property type="evidence" value="ECO:0007669"/>
    <property type="project" value="UniProtKB-UniRule"/>
</dbReference>
<dbReference type="FunFam" id="3.30.70.3160:FF:000001">
    <property type="entry name" value="Probable tRNA pseudouridine synthase D"/>
    <property type="match status" value="1"/>
</dbReference>
<dbReference type="Gene3D" id="1.10.1510.30">
    <property type="match status" value="1"/>
</dbReference>
<dbReference type="Gene3D" id="3.30.70.3160">
    <property type="match status" value="1"/>
</dbReference>
<dbReference type="Gene3D" id="3.30.2350.20">
    <property type="entry name" value="TruD, catalytic domain"/>
    <property type="match status" value="1"/>
</dbReference>
<dbReference type="HAMAP" id="MF_01082">
    <property type="entry name" value="TruD"/>
    <property type="match status" value="1"/>
</dbReference>
<dbReference type="InterPro" id="IPR020103">
    <property type="entry name" value="PsdUridine_synth_cat_dom_sf"/>
</dbReference>
<dbReference type="InterPro" id="IPR001656">
    <property type="entry name" value="PsdUridine_synth_TruD"/>
</dbReference>
<dbReference type="InterPro" id="IPR020119">
    <property type="entry name" value="PsdUridine_synth_TruD_CS"/>
</dbReference>
<dbReference type="InterPro" id="IPR011760">
    <property type="entry name" value="PsdUridine_synth_TruD_insert"/>
</dbReference>
<dbReference type="InterPro" id="IPR042214">
    <property type="entry name" value="TruD_catalytic"/>
</dbReference>
<dbReference type="NCBIfam" id="TIGR00094">
    <property type="entry name" value="tRNA_TruD_broad"/>
    <property type="match status" value="1"/>
</dbReference>
<dbReference type="PANTHER" id="PTHR13326:SF21">
    <property type="entry name" value="PSEUDOURIDYLATE SYNTHASE PUS7L"/>
    <property type="match status" value="1"/>
</dbReference>
<dbReference type="PANTHER" id="PTHR13326">
    <property type="entry name" value="TRNA PSEUDOURIDINE SYNTHASE D"/>
    <property type="match status" value="1"/>
</dbReference>
<dbReference type="Pfam" id="PF01142">
    <property type="entry name" value="TruD"/>
    <property type="match status" value="1"/>
</dbReference>
<dbReference type="PIRSF" id="PIRSF037016">
    <property type="entry name" value="Pseudouridin_synth_euk_prd"/>
    <property type="match status" value="1"/>
</dbReference>
<dbReference type="SUPFAM" id="SSF55120">
    <property type="entry name" value="Pseudouridine synthase"/>
    <property type="match status" value="1"/>
</dbReference>
<dbReference type="PROSITE" id="PS50984">
    <property type="entry name" value="TRUD"/>
    <property type="match status" value="1"/>
</dbReference>
<dbReference type="PROSITE" id="PS01268">
    <property type="entry name" value="UPF0024"/>
    <property type="match status" value="1"/>
</dbReference>